<keyword id="KW-0378">Hydrolase</keyword>
<keyword id="KW-0464">Manganese</keyword>
<dbReference type="EC" id="3.5.4.2" evidence="1"/>
<dbReference type="EMBL" id="AM236080">
    <property type="protein sequence ID" value="CAK09373.1"/>
    <property type="molecule type" value="Genomic_DNA"/>
</dbReference>
<dbReference type="RefSeq" id="WP_011653318.1">
    <property type="nucleotide sequence ID" value="NC_008380.1"/>
</dbReference>
<dbReference type="SMR" id="Q1MCF8"/>
<dbReference type="EnsemblBacteria" id="CAK09373">
    <property type="protein sequence ID" value="CAK09373"/>
    <property type="gene ID" value="RL3883"/>
</dbReference>
<dbReference type="KEGG" id="rle:RL3883"/>
<dbReference type="eggNOG" id="COG1001">
    <property type="taxonomic scope" value="Bacteria"/>
</dbReference>
<dbReference type="HOGENOM" id="CLU_027935_0_0_5"/>
<dbReference type="Proteomes" id="UP000006575">
    <property type="component" value="Chromosome"/>
</dbReference>
<dbReference type="GO" id="GO:0000034">
    <property type="term" value="F:adenine deaminase activity"/>
    <property type="evidence" value="ECO:0007669"/>
    <property type="project" value="UniProtKB-UniRule"/>
</dbReference>
<dbReference type="GO" id="GO:0006146">
    <property type="term" value="P:adenine catabolic process"/>
    <property type="evidence" value="ECO:0007669"/>
    <property type="project" value="InterPro"/>
</dbReference>
<dbReference type="Gene3D" id="3.20.20.140">
    <property type="entry name" value="Metal-dependent hydrolases"/>
    <property type="match status" value="1"/>
</dbReference>
<dbReference type="Gene3D" id="2.30.40.10">
    <property type="entry name" value="Urease, subunit C, domain 1"/>
    <property type="match status" value="1"/>
</dbReference>
<dbReference type="HAMAP" id="MF_01518">
    <property type="entry name" value="Adenine_deamin"/>
    <property type="match status" value="1"/>
</dbReference>
<dbReference type="InterPro" id="IPR006679">
    <property type="entry name" value="Adenine_deam"/>
</dbReference>
<dbReference type="InterPro" id="IPR026912">
    <property type="entry name" value="Adenine_deam_C"/>
</dbReference>
<dbReference type="InterPro" id="IPR006680">
    <property type="entry name" value="Amidohydro-rel"/>
</dbReference>
<dbReference type="InterPro" id="IPR011059">
    <property type="entry name" value="Metal-dep_hydrolase_composite"/>
</dbReference>
<dbReference type="InterPro" id="IPR032466">
    <property type="entry name" value="Metal_Hydrolase"/>
</dbReference>
<dbReference type="PANTHER" id="PTHR11113:SF2">
    <property type="entry name" value="ADENINE DEAMINASE"/>
    <property type="match status" value="1"/>
</dbReference>
<dbReference type="PANTHER" id="PTHR11113">
    <property type="entry name" value="N-ACETYLGLUCOSAMINE-6-PHOSPHATE DEACETYLASE"/>
    <property type="match status" value="1"/>
</dbReference>
<dbReference type="Pfam" id="PF13382">
    <property type="entry name" value="Adenine_deam_C"/>
    <property type="match status" value="1"/>
</dbReference>
<dbReference type="Pfam" id="PF01979">
    <property type="entry name" value="Amidohydro_1"/>
    <property type="match status" value="1"/>
</dbReference>
<dbReference type="SUPFAM" id="SSF51338">
    <property type="entry name" value="Composite domain of metallo-dependent hydrolases"/>
    <property type="match status" value="1"/>
</dbReference>
<dbReference type="SUPFAM" id="SSF51556">
    <property type="entry name" value="Metallo-dependent hydrolases"/>
    <property type="match status" value="1"/>
</dbReference>
<evidence type="ECO:0000255" key="1">
    <source>
        <dbReference type="HAMAP-Rule" id="MF_01518"/>
    </source>
</evidence>
<organism>
    <name type="scientific">Rhizobium johnstonii (strain DSM 114642 / LMG 32736 / 3841)</name>
    <name type="common">Rhizobium leguminosarum bv. viciae</name>
    <dbReference type="NCBI Taxonomy" id="216596"/>
    <lineage>
        <taxon>Bacteria</taxon>
        <taxon>Pseudomonadati</taxon>
        <taxon>Pseudomonadota</taxon>
        <taxon>Alphaproteobacteria</taxon>
        <taxon>Hyphomicrobiales</taxon>
        <taxon>Rhizobiaceae</taxon>
        <taxon>Rhizobium/Agrobacterium group</taxon>
        <taxon>Rhizobium</taxon>
        <taxon>Rhizobium johnstonii</taxon>
    </lineage>
</organism>
<proteinExistence type="inferred from homology"/>
<accession>Q1MCF8</accession>
<comment type="catalytic activity">
    <reaction evidence="1">
        <text>adenine + H2O + H(+) = hypoxanthine + NH4(+)</text>
        <dbReference type="Rhea" id="RHEA:23688"/>
        <dbReference type="ChEBI" id="CHEBI:15377"/>
        <dbReference type="ChEBI" id="CHEBI:15378"/>
        <dbReference type="ChEBI" id="CHEBI:16708"/>
        <dbReference type="ChEBI" id="CHEBI:17368"/>
        <dbReference type="ChEBI" id="CHEBI:28938"/>
        <dbReference type="EC" id="3.5.4.2"/>
    </reaction>
</comment>
<comment type="cofactor">
    <cofactor evidence="1">
        <name>Mn(2+)</name>
        <dbReference type="ChEBI" id="CHEBI:29035"/>
    </cofactor>
</comment>
<comment type="similarity">
    <text evidence="1">Belongs to the metallo-dependent hydrolases superfamily. Adenine deaminase family.</text>
</comment>
<gene>
    <name evidence="1" type="primary">ade2</name>
    <name type="ordered locus">RL3883</name>
</gene>
<reference key="1">
    <citation type="journal article" date="2006" name="Genome Biol.">
        <title>The genome of Rhizobium leguminosarum has recognizable core and accessory components.</title>
        <authorList>
            <person name="Young J.P.W."/>
            <person name="Crossman L.C."/>
            <person name="Johnston A.W.B."/>
            <person name="Thomson N.R."/>
            <person name="Ghazoui Z.F."/>
            <person name="Hull K.H."/>
            <person name="Wexler M."/>
            <person name="Curson A.R.J."/>
            <person name="Todd J.D."/>
            <person name="Poole P.S."/>
            <person name="Mauchline T.H."/>
            <person name="East A.K."/>
            <person name="Quail M.A."/>
            <person name="Churcher C."/>
            <person name="Arrowsmith C."/>
            <person name="Cherevach I."/>
            <person name="Chillingworth T."/>
            <person name="Clarke K."/>
            <person name="Cronin A."/>
            <person name="Davis P."/>
            <person name="Fraser A."/>
            <person name="Hance Z."/>
            <person name="Hauser H."/>
            <person name="Jagels K."/>
            <person name="Moule S."/>
            <person name="Mungall K."/>
            <person name="Norbertczak H."/>
            <person name="Rabbinowitsch E."/>
            <person name="Sanders M."/>
            <person name="Simmonds M."/>
            <person name="Whitehead S."/>
            <person name="Parkhill J."/>
        </authorList>
    </citation>
    <scope>NUCLEOTIDE SEQUENCE [LARGE SCALE GENOMIC DNA]</scope>
    <source>
        <strain>DSM 114642 / LMG 32736 / 3841</strain>
    </source>
</reference>
<sequence length="595" mass="62817">MNATARQEPADLNDPALRARAVTAARGDAPFDMLITGGRLLDTVTGLIRQADIGLVGALISSVHAPASRTDAVEIIDAAGSILTPGLIDTHMHIESSMVTPAEYASAVLPRGVTTIVWDPHEFGNVHGLDGVRWAIEAARSLPLRMILLAPSCVPSAPGLELAGADFDASMITEMLHSSAVGGVAEVMNMRGVIDGDPRMTDIVNAGLAAGKLVCGHARGLEGADLNAFMASGITSDHELTSGADLLAKLSAGLTIELRGSHDHLLQEFVEVLSGLGHLPPTVTLCTDDVFPDELQEGGGLDDVVRRLVRYGMKPEWAIRAATFNAAQRLKRSDLGLVATGRRADIVLFEDLTEFRARLVISGGRIVARNGSMQVAVQQIDTAPLVNSVKLPPLTENDFRIPAKGERVRVATIDRPRFTQWGEAETEVRDGFIVPPAGSAMISVAHRHGKTDGIPRIGFLTGWGEWRGAFCTTVSHDSHNLTVFGGNAGDMALAANAVISAGGGMAVAKDGRIEAMLPLPLSGLVTDASLKDTALAFAGIRKAMEKIVTWKPPYLVFKACFGATLACNVGPHQTDQGIADVVTGKVLENPVLAVW</sequence>
<protein>
    <recommendedName>
        <fullName evidence="1">Adenine deaminase 2</fullName>
        <shortName evidence="1">Adenase 2</shortName>
        <shortName evidence="1">Adenine aminase 2</shortName>
        <ecNumber evidence="1">3.5.4.2</ecNumber>
    </recommendedName>
</protein>
<name>ADEC2_RHIJ3</name>
<feature type="chain" id="PRO_0000292395" description="Adenine deaminase 2">
    <location>
        <begin position="1"/>
        <end position="595"/>
    </location>
</feature>